<dbReference type="EMBL" id="CP000661">
    <property type="protein sequence ID" value="ABP71325.1"/>
    <property type="molecule type" value="Genomic_DNA"/>
</dbReference>
<dbReference type="SMR" id="A4WVB1"/>
<dbReference type="STRING" id="349102.Rsph17025_2437"/>
<dbReference type="KEGG" id="rsq:Rsph17025_2437"/>
<dbReference type="eggNOG" id="COG0828">
    <property type="taxonomic scope" value="Bacteria"/>
</dbReference>
<dbReference type="HOGENOM" id="CLU_159258_0_1_5"/>
<dbReference type="BioCyc" id="RSPH349102:G1G8M-2512-MONOMER"/>
<dbReference type="GO" id="GO:1990904">
    <property type="term" value="C:ribonucleoprotein complex"/>
    <property type="evidence" value="ECO:0007669"/>
    <property type="project" value="UniProtKB-KW"/>
</dbReference>
<dbReference type="GO" id="GO:0005840">
    <property type="term" value="C:ribosome"/>
    <property type="evidence" value="ECO:0007669"/>
    <property type="project" value="UniProtKB-KW"/>
</dbReference>
<dbReference type="GO" id="GO:0003735">
    <property type="term" value="F:structural constituent of ribosome"/>
    <property type="evidence" value="ECO:0007669"/>
    <property type="project" value="InterPro"/>
</dbReference>
<dbReference type="GO" id="GO:0006412">
    <property type="term" value="P:translation"/>
    <property type="evidence" value="ECO:0007669"/>
    <property type="project" value="UniProtKB-UniRule"/>
</dbReference>
<dbReference type="Gene3D" id="1.20.5.1150">
    <property type="entry name" value="Ribosomal protein S8"/>
    <property type="match status" value="1"/>
</dbReference>
<dbReference type="HAMAP" id="MF_00358">
    <property type="entry name" value="Ribosomal_bS21"/>
    <property type="match status" value="1"/>
</dbReference>
<dbReference type="InterPro" id="IPR001911">
    <property type="entry name" value="Ribosomal_bS21"/>
</dbReference>
<dbReference type="InterPro" id="IPR018278">
    <property type="entry name" value="Ribosomal_bS21_CS"/>
</dbReference>
<dbReference type="InterPro" id="IPR038380">
    <property type="entry name" value="Ribosomal_bS21_sf"/>
</dbReference>
<dbReference type="NCBIfam" id="TIGR00030">
    <property type="entry name" value="S21p"/>
    <property type="match status" value="1"/>
</dbReference>
<dbReference type="PANTHER" id="PTHR21109">
    <property type="entry name" value="MITOCHONDRIAL 28S RIBOSOMAL PROTEIN S21"/>
    <property type="match status" value="1"/>
</dbReference>
<dbReference type="PANTHER" id="PTHR21109:SF0">
    <property type="entry name" value="SMALL RIBOSOMAL SUBUNIT PROTEIN BS21M"/>
    <property type="match status" value="1"/>
</dbReference>
<dbReference type="Pfam" id="PF01165">
    <property type="entry name" value="Ribosomal_S21"/>
    <property type="match status" value="1"/>
</dbReference>
<dbReference type="PROSITE" id="PS01181">
    <property type="entry name" value="RIBOSOMAL_S21"/>
    <property type="match status" value="1"/>
</dbReference>
<comment type="similarity">
    <text evidence="1">Belongs to the bacterial ribosomal protein bS21 family.</text>
</comment>
<evidence type="ECO:0000255" key="1">
    <source>
        <dbReference type="HAMAP-Rule" id="MF_00358"/>
    </source>
</evidence>
<evidence type="ECO:0000305" key="2"/>
<protein>
    <recommendedName>
        <fullName evidence="1">Small ribosomal subunit protein bS21</fullName>
    </recommendedName>
    <alternativeName>
        <fullName evidence="2">30S ribosomal protein S21</fullName>
    </alternativeName>
</protein>
<gene>
    <name evidence="1" type="primary">rpsU</name>
    <name type="ordered locus">Rsph17025_2437</name>
</gene>
<reference key="1">
    <citation type="submission" date="2007-04" db="EMBL/GenBank/DDBJ databases">
        <title>Complete sequence of chromosome of Rhodobacter sphaeroides ATCC 17025.</title>
        <authorList>
            <consortium name="US DOE Joint Genome Institute"/>
            <person name="Copeland A."/>
            <person name="Lucas S."/>
            <person name="Lapidus A."/>
            <person name="Barry K."/>
            <person name="Detter J.C."/>
            <person name="Glavina del Rio T."/>
            <person name="Hammon N."/>
            <person name="Israni S."/>
            <person name="Dalin E."/>
            <person name="Tice H."/>
            <person name="Pitluck S."/>
            <person name="Chertkov O."/>
            <person name="Brettin T."/>
            <person name="Bruce D."/>
            <person name="Han C."/>
            <person name="Schmutz J."/>
            <person name="Larimer F."/>
            <person name="Land M."/>
            <person name="Hauser L."/>
            <person name="Kyrpides N."/>
            <person name="Kim E."/>
            <person name="Richardson P."/>
            <person name="Mackenzie C."/>
            <person name="Choudhary M."/>
            <person name="Donohue T.J."/>
            <person name="Kaplan S."/>
        </authorList>
    </citation>
    <scope>NUCLEOTIDE SEQUENCE [LARGE SCALE GENOMIC DNA]</scope>
    <source>
        <strain>ATCC 17025 / ATH 2.4.3</strain>
    </source>
</reference>
<organism>
    <name type="scientific">Cereibacter sphaeroides (strain ATCC 17025 / ATH 2.4.3)</name>
    <name type="common">Rhodobacter sphaeroides</name>
    <dbReference type="NCBI Taxonomy" id="349102"/>
    <lineage>
        <taxon>Bacteria</taxon>
        <taxon>Pseudomonadati</taxon>
        <taxon>Pseudomonadota</taxon>
        <taxon>Alphaproteobacteria</taxon>
        <taxon>Rhodobacterales</taxon>
        <taxon>Paracoccaceae</taxon>
        <taxon>Cereibacter</taxon>
    </lineage>
</organism>
<feature type="chain" id="PRO_1000005163" description="Small ribosomal subunit protein bS21">
    <location>
        <begin position="1"/>
        <end position="68"/>
    </location>
</feature>
<sequence length="68" mass="8026">MQVSVRDNNVEQALRALKKKLQREGVFREMKLKQHFEKPSVKRAREQAEAVRRARKLARKKAQREGAL</sequence>
<keyword id="KW-0687">Ribonucleoprotein</keyword>
<keyword id="KW-0689">Ribosomal protein</keyword>
<name>RS21_CERS5</name>
<proteinExistence type="inferred from homology"/>
<accession>A4WVB1</accession>